<reference key="1">
    <citation type="journal article" date="1977" name="Biochem. J.">
        <title>The amino acid sequence of cytochrome c from the locust, Schistocerca gregaria Forskal.</title>
        <authorList>
            <person name="Lyddiatt A."/>
            <person name="Boulter D."/>
        </authorList>
    </citation>
    <scope>PROTEIN SEQUENCE OF 2-108</scope>
</reference>
<sequence length="108" mass="11943">MGVPQGDVEKGKKIFVQRCAQCHTVEAGGKHKTGPNLHGLFGRKTGQAPGFSYTDANKSKGITWDENTLFIYLENPKKYIPGTKMVFAGLKKPEERADLIAYLKESTK</sequence>
<organism>
    <name type="scientific">Schistocerca gregaria</name>
    <name type="common">Desert locust</name>
    <name type="synonym">Gryllus gregarius</name>
    <dbReference type="NCBI Taxonomy" id="7010"/>
    <lineage>
        <taxon>Eukaryota</taxon>
        <taxon>Metazoa</taxon>
        <taxon>Ecdysozoa</taxon>
        <taxon>Arthropoda</taxon>
        <taxon>Hexapoda</taxon>
        <taxon>Insecta</taxon>
        <taxon>Pterygota</taxon>
        <taxon>Neoptera</taxon>
        <taxon>Polyneoptera</taxon>
        <taxon>Orthoptera</taxon>
        <taxon>Caelifera</taxon>
        <taxon>Acrididea</taxon>
        <taxon>Acridomorpha</taxon>
        <taxon>Acridoidea</taxon>
        <taxon>Acrididae</taxon>
        <taxon>Cyrtacanthacridinae</taxon>
        <taxon>Schistocerca</taxon>
    </lineage>
</organism>
<keyword id="KW-0903">Direct protein sequencing</keyword>
<keyword id="KW-0249">Electron transport</keyword>
<keyword id="KW-0349">Heme</keyword>
<keyword id="KW-0408">Iron</keyword>
<keyword id="KW-0479">Metal-binding</keyword>
<keyword id="KW-0496">Mitochondrion</keyword>
<keyword id="KW-0679">Respiratory chain</keyword>
<keyword id="KW-0813">Transport</keyword>
<accession>P00040</accession>
<evidence type="ECO:0000269" key="1">
    <source>
    </source>
</evidence>
<evidence type="ECO:0000305" key="2"/>
<protein>
    <recommendedName>
        <fullName>Cytochrome c</fullName>
    </recommendedName>
</protein>
<name>CYC_SCHGR</name>
<feature type="initiator methionine" description="Removed" evidence="1">
    <location>
        <position position="1"/>
    </location>
</feature>
<feature type="chain" id="PRO_0000108267" description="Cytochrome c">
    <location>
        <begin position="2"/>
        <end position="108"/>
    </location>
</feature>
<feature type="binding site" description="covalent">
    <location>
        <position position="19"/>
    </location>
    <ligand>
        <name>heme c</name>
        <dbReference type="ChEBI" id="CHEBI:61717"/>
    </ligand>
</feature>
<feature type="binding site" description="covalent">
    <location>
        <position position="22"/>
    </location>
    <ligand>
        <name>heme c</name>
        <dbReference type="ChEBI" id="CHEBI:61717"/>
    </ligand>
</feature>
<feature type="binding site" description="axial binding residue">
    <location>
        <position position="23"/>
    </location>
    <ligand>
        <name>heme c</name>
        <dbReference type="ChEBI" id="CHEBI:61717"/>
    </ligand>
    <ligandPart>
        <name>Fe</name>
        <dbReference type="ChEBI" id="CHEBI:18248"/>
    </ligandPart>
</feature>
<feature type="binding site" description="axial binding residue">
    <location>
        <position position="85"/>
    </location>
    <ligand>
        <name>heme c</name>
        <dbReference type="ChEBI" id="CHEBI:61717"/>
    </ligand>
    <ligandPart>
        <name>Fe</name>
        <dbReference type="ChEBI" id="CHEBI:18248"/>
    </ligandPart>
</feature>
<dbReference type="PIR" id="A00033">
    <property type="entry name" value="CCLQ"/>
</dbReference>
<dbReference type="SMR" id="P00040"/>
<dbReference type="OrthoDB" id="449280at2759"/>
<dbReference type="GO" id="GO:0005758">
    <property type="term" value="C:mitochondrial intermembrane space"/>
    <property type="evidence" value="ECO:0007669"/>
    <property type="project" value="UniProtKB-SubCell"/>
</dbReference>
<dbReference type="GO" id="GO:0009055">
    <property type="term" value="F:electron transfer activity"/>
    <property type="evidence" value="ECO:0007669"/>
    <property type="project" value="InterPro"/>
</dbReference>
<dbReference type="GO" id="GO:0020037">
    <property type="term" value="F:heme binding"/>
    <property type="evidence" value="ECO:0007669"/>
    <property type="project" value="InterPro"/>
</dbReference>
<dbReference type="GO" id="GO:0046872">
    <property type="term" value="F:metal ion binding"/>
    <property type="evidence" value="ECO:0007669"/>
    <property type="project" value="UniProtKB-KW"/>
</dbReference>
<dbReference type="FunFam" id="1.10.760.10:FF:000001">
    <property type="entry name" value="Cytochrome c iso-1"/>
    <property type="match status" value="1"/>
</dbReference>
<dbReference type="Gene3D" id="1.10.760.10">
    <property type="entry name" value="Cytochrome c-like domain"/>
    <property type="match status" value="1"/>
</dbReference>
<dbReference type="InterPro" id="IPR009056">
    <property type="entry name" value="Cyt_c-like_dom"/>
</dbReference>
<dbReference type="InterPro" id="IPR036909">
    <property type="entry name" value="Cyt_c-like_dom_sf"/>
</dbReference>
<dbReference type="InterPro" id="IPR002327">
    <property type="entry name" value="Cyt_c_1A/1B"/>
</dbReference>
<dbReference type="PANTHER" id="PTHR11961">
    <property type="entry name" value="CYTOCHROME C"/>
    <property type="match status" value="1"/>
</dbReference>
<dbReference type="Pfam" id="PF00034">
    <property type="entry name" value="Cytochrom_C"/>
    <property type="match status" value="1"/>
</dbReference>
<dbReference type="PRINTS" id="PR00604">
    <property type="entry name" value="CYTCHRMECIAB"/>
</dbReference>
<dbReference type="SUPFAM" id="SSF46626">
    <property type="entry name" value="Cytochrome c"/>
    <property type="match status" value="1"/>
</dbReference>
<dbReference type="PROSITE" id="PS51007">
    <property type="entry name" value="CYTC"/>
    <property type="match status" value="1"/>
</dbReference>
<comment type="function">
    <text>Electron carrier protein. The oxidized form of the cytochrome c heme group can accept an electron from the heme group of the cytochrome c1 subunit of cytochrome reductase. Cytochrome c then transfers this electron to the cytochrome oxidase complex, the final protein carrier in the mitochondrial electron-transport chain.</text>
</comment>
<comment type="subcellular location">
    <subcellularLocation>
        <location>Mitochondrion intermembrane space</location>
    </subcellularLocation>
    <text>Loosely associated with the inner membrane.</text>
</comment>
<comment type="PTM">
    <text>Binds 1 heme c group covalently per subunit.</text>
</comment>
<comment type="similarity">
    <text evidence="2">Belongs to the cytochrome c family.</text>
</comment>
<comment type="online information" name="Protein Spotlight">
    <link uri="https://www.proteinspotlight.org/back_issues/076"/>
    <text>Life shuttle - Issue 76 of November 2006</text>
</comment>
<proteinExistence type="evidence at protein level"/>